<evidence type="ECO:0000250" key="1">
    <source>
        <dbReference type="UniProtKB" id="P82742"/>
    </source>
</evidence>
<evidence type="ECO:0000269" key="2">
    <source>
    </source>
</evidence>
<evidence type="ECO:0000303" key="3">
    <source>
    </source>
</evidence>
<evidence type="ECO:0000305" key="4"/>
<evidence type="ECO:0000305" key="5">
    <source>
    </source>
</evidence>
<name>RN2B_LITST</name>
<reference key="1">
    <citation type="journal article" date="2004" name="Comp. Biochem. Physiol.">
        <title>Purification and characterization of antimicrobial peptides from the skin secretions of the mink frog (Rana septentrionalis).</title>
        <authorList>
            <person name="Bevier C.R."/>
            <person name="Sonnevend A."/>
            <person name="Kolodziejek J."/>
            <person name="Nowotny N."/>
            <person name="Nielsen P.F."/>
            <person name="Conlon J.M."/>
        </authorList>
    </citation>
    <scope>PROTEIN SEQUENCE</scope>
    <scope>SUBCELLULAR LOCATION</scope>
    <scope>MASS SPECTROMETRY</scope>
    <scope>DEVELOPMENTAL STAGE</scope>
    <scope>DISULFIDE BOND</scope>
    <source>
        <tissue>Skin secretion</tissue>
    </source>
</reference>
<protein>
    <recommendedName>
        <fullName evidence="3">Ranatuerin-2SPb</fullName>
    </recommendedName>
</protein>
<keyword id="KW-0878">Amphibian defense peptide</keyword>
<keyword id="KW-0044">Antibiotic</keyword>
<keyword id="KW-0929">Antimicrobial</keyword>
<keyword id="KW-0903">Direct protein sequencing</keyword>
<keyword id="KW-1015">Disulfide bond</keyword>
<keyword id="KW-0295">Fungicide</keyword>
<keyword id="KW-0964">Secreted</keyword>
<comment type="function">
    <text evidence="1">Antibacterial activity against Gram-positive bacterium S.aureus. Shows no detectable hemolytic activity towards human erythrocytes.</text>
</comment>
<comment type="subcellular location">
    <subcellularLocation>
        <location evidence="2">Secreted</location>
    </subcellularLocation>
</comment>
<comment type="tissue specificity">
    <text evidence="5">Expressed by the skin glands.</text>
</comment>
<comment type="developmental stage">
    <text evidence="5">Is equally expressed in juvenile and adult (male and female) frogs.</text>
</comment>
<comment type="mass spectrometry" mass="3698.6" method="MALDI" evidence="2"/>
<comment type="similarity">
    <text evidence="4">Belongs to the frog skin active peptide (FSAP) family. Ranatuerin subfamily.</text>
</comment>
<comment type="online information" name="The antimicrobial peptide database">
    <link uri="https://wangapd3.com/database/query_output.php?ID=01443"/>
</comment>
<feature type="peptide" id="PRO_0000449481" description="Ranatuerin-2SPb" evidence="2">
    <location>
        <begin position="1"/>
        <end position="35"/>
    </location>
</feature>
<feature type="disulfide bond" evidence="2">
    <location>
        <begin position="28"/>
        <end position="33"/>
    </location>
</feature>
<accession>P0DQK4</accession>
<sequence length="35" mass="3703">GLFLNTVKDVAKDVAKDVAGKLLESLKCKITGCKP</sequence>
<dbReference type="SMR" id="P0DQK4"/>
<dbReference type="GO" id="GO:0005576">
    <property type="term" value="C:extracellular region"/>
    <property type="evidence" value="ECO:0007669"/>
    <property type="project" value="UniProtKB-SubCell"/>
</dbReference>
<dbReference type="GO" id="GO:0050832">
    <property type="term" value="P:defense response to fungus"/>
    <property type="evidence" value="ECO:0007669"/>
    <property type="project" value="UniProtKB-KW"/>
</dbReference>
<dbReference type="GO" id="GO:0050829">
    <property type="term" value="P:defense response to Gram-negative bacterium"/>
    <property type="evidence" value="ECO:0007669"/>
    <property type="project" value="UniProtKB-ARBA"/>
</dbReference>
<dbReference type="GO" id="GO:0031640">
    <property type="term" value="P:killing of cells of another organism"/>
    <property type="evidence" value="ECO:0007669"/>
    <property type="project" value="UniProtKB-KW"/>
</dbReference>
<dbReference type="InterPro" id="IPR012521">
    <property type="entry name" value="Antimicrobial_frog_2"/>
</dbReference>
<dbReference type="Pfam" id="PF08023">
    <property type="entry name" value="Antimicrobial_2"/>
    <property type="match status" value="1"/>
</dbReference>
<proteinExistence type="evidence at protein level"/>
<organism>
    <name type="scientific">Lithobates septentrionalis</name>
    <name type="common">Mink frog</name>
    <name type="synonym">Rana septentrionalis</name>
    <dbReference type="NCBI Taxonomy" id="190274"/>
    <lineage>
        <taxon>Eukaryota</taxon>
        <taxon>Metazoa</taxon>
        <taxon>Chordata</taxon>
        <taxon>Craniata</taxon>
        <taxon>Vertebrata</taxon>
        <taxon>Euteleostomi</taxon>
        <taxon>Amphibia</taxon>
        <taxon>Batrachia</taxon>
        <taxon>Anura</taxon>
        <taxon>Neobatrachia</taxon>
        <taxon>Ranoidea</taxon>
        <taxon>Ranidae</taxon>
        <taxon>Lithobates</taxon>
    </lineage>
</organism>